<keyword id="KW-0045">Antibiotic biosynthesis</keyword>
<keyword id="KW-1185">Reference proteome</keyword>
<gene>
    <name evidence="3" type="primary">phzA1</name>
    <name type="ordered locus">PA4210</name>
</gene>
<comment type="function">
    <text evidence="2 5">Involved in the biosynthesis of the antibiotic phenazine, a nitrogen-containing heterocyclic molecule. PhzA1 (operon phzA1B1C1E1F1G1) has a role in the biosynthesis of the phenazine during planktonic growth.</text>
</comment>
<comment type="pathway">
    <text evidence="5">Antibiotic biosynthesis; phenazine biosynthesis.</text>
</comment>
<comment type="induction">
    <text evidence="1 2">Under control of LasR (PubMed:11544214). In liquid cultures (aerobic), phz1 operon is induced by quinolone signal via 2-heptyl-3-hydroxy-4-quinolone (PQS) (PubMed:23129634). In biofilm (microaerobic), phz1 operon is not induced by PQS, because the biosynthesis of PQS by the monooxygenase PqsH requires molecular oxygen (PubMed:23129634).</text>
</comment>
<comment type="similarity">
    <text evidence="4">Belongs to the PhzA/PhzB family.</text>
</comment>
<sequence length="162" mass="19212">MNGQRYRETPLDIERLRRLNRATVERYMAMKGAERLQRHSLFVEDGCAGNWTTESGEPLVFRGHESLRRLAEWLERCFPDWEWHNVRIFETEDPNHFWVECDGRGKALVPGYPQGYCENHYIHSFELENGRIKRNREFMNPIQKLRALGIAVPQIKRDGIPT</sequence>
<organism>
    <name type="scientific">Pseudomonas aeruginosa (strain ATCC 15692 / DSM 22644 / CIP 104116 / JCM 14847 / LMG 12228 / 1C / PRS 101 / PAO1)</name>
    <dbReference type="NCBI Taxonomy" id="208964"/>
    <lineage>
        <taxon>Bacteria</taxon>
        <taxon>Pseudomonadati</taxon>
        <taxon>Pseudomonadota</taxon>
        <taxon>Gammaproteobacteria</taxon>
        <taxon>Pseudomonadales</taxon>
        <taxon>Pseudomonadaceae</taxon>
        <taxon>Pseudomonas</taxon>
    </lineage>
</organism>
<accession>Q9HWH1</accession>
<accession>O69752</accession>
<protein>
    <recommendedName>
        <fullName evidence="3">Phenazine biosynthesis protein PhzA1</fullName>
    </recommendedName>
</protein>
<proteinExistence type="evidence at transcript level"/>
<reference key="1">
    <citation type="journal article" date="2001" name="J. Bacteriol.">
        <title>Functional analysis of genes for biosynthesis of pyocyanin and phenazine-1-carboxamide from Pseudomonas aeruginosa PAO1.</title>
        <authorList>
            <person name="Mavrodi D.V."/>
            <person name="Bonsall R.F."/>
            <person name="Delaney S.M."/>
            <person name="Soule M.J."/>
            <person name="Phillips G."/>
            <person name="Thomashow L.S."/>
        </authorList>
    </citation>
    <scope>NUCLEOTIDE SEQUENCE [GENOMIC DNA]</scope>
    <scope>FUNCTION</scope>
    <scope>PATHWAY</scope>
    <source>
        <strain>ATCC 15692 / DSM 22644 / CIP 104116 / JCM 14847 / LMG 12228 / 1C / PRS 101 / PAO1</strain>
    </source>
</reference>
<reference key="2">
    <citation type="journal article" date="2000" name="Nature">
        <title>Complete genome sequence of Pseudomonas aeruginosa PAO1, an opportunistic pathogen.</title>
        <authorList>
            <person name="Stover C.K."/>
            <person name="Pham X.-Q.T."/>
            <person name="Erwin A.L."/>
            <person name="Mizoguchi S.D."/>
            <person name="Warrener P."/>
            <person name="Hickey M.J."/>
            <person name="Brinkman F.S.L."/>
            <person name="Hufnagle W.O."/>
            <person name="Kowalik D.J."/>
            <person name="Lagrou M."/>
            <person name="Garber R.L."/>
            <person name="Goltry L."/>
            <person name="Tolentino E."/>
            <person name="Westbrock-Wadman S."/>
            <person name="Yuan Y."/>
            <person name="Brody L.L."/>
            <person name="Coulter S.N."/>
            <person name="Folger K.R."/>
            <person name="Kas A."/>
            <person name="Larbig K."/>
            <person name="Lim R.M."/>
            <person name="Smith K.A."/>
            <person name="Spencer D.H."/>
            <person name="Wong G.K.-S."/>
            <person name="Wu Z."/>
            <person name="Paulsen I.T."/>
            <person name="Reizer J."/>
            <person name="Saier M.H. Jr."/>
            <person name="Hancock R.E.W."/>
            <person name="Lory S."/>
            <person name="Olson M.V."/>
        </authorList>
    </citation>
    <scope>NUCLEOTIDE SEQUENCE [LARGE SCALE GENOMIC DNA]</scope>
    <source>
        <strain>ATCC 15692 / DSM 22644 / CIP 104116 / JCM 14847 / LMG 12228 / 1C / PRS 101 / PAO1</strain>
    </source>
</reference>
<reference key="3">
    <citation type="journal article" date="2001" name="J. Bacteriol.">
        <title>Promoter specificity elements in Pseudomonas aeruginosa quorum-sensing-controlled genes.</title>
        <authorList>
            <person name="Whiteley M."/>
            <person name="Greenberg E.P."/>
        </authorList>
    </citation>
    <scope>INDUCTION</scope>
</reference>
<reference key="4">
    <citation type="journal article" date="2012" name="Proc. Natl. Acad. Sci. U.S.A.">
        <title>Redundant phenazine operons in Pseudomonas aeruginosa exhibit environment-dependent expression and differential roles in pathogenicity.</title>
        <authorList>
            <person name="Recinos D.A."/>
            <person name="Sekedat M.D."/>
            <person name="Hernandez A."/>
            <person name="Cohen T.S."/>
            <person name="Sakhtah H."/>
            <person name="Prince A.S."/>
            <person name="Price-Whelan A."/>
            <person name="Dietrich L.E."/>
        </authorList>
    </citation>
    <scope>FUNCTION</scope>
    <scope>INDUCTION</scope>
</reference>
<evidence type="ECO:0000269" key="1">
    <source>
    </source>
</evidence>
<evidence type="ECO:0000269" key="2">
    <source>
    </source>
</evidence>
<evidence type="ECO:0000303" key="3">
    <source>
    </source>
</evidence>
<evidence type="ECO:0000305" key="4"/>
<evidence type="ECO:0000305" key="5">
    <source>
    </source>
</evidence>
<name>PHZA1_PSEAE</name>
<dbReference type="EMBL" id="AF005404">
    <property type="protein sequence ID" value="AAC64489.1"/>
    <property type="molecule type" value="Genomic_DNA"/>
</dbReference>
<dbReference type="EMBL" id="AE004091">
    <property type="protein sequence ID" value="AAG07597.1"/>
    <property type="molecule type" value="Genomic_DNA"/>
</dbReference>
<dbReference type="PIR" id="E83118">
    <property type="entry name" value="E83118"/>
</dbReference>
<dbReference type="RefSeq" id="NP_252899.1">
    <property type="nucleotide sequence ID" value="NC_002516.2"/>
</dbReference>
<dbReference type="SMR" id="Q9HWH1"/>
<dbReference type="STRING" id="208964.PA4210"/>
<dbReference type="PaxDb" id="208964-PA4210"/>
<dbReference type="DNASU" id="880515"/>
<dbReference type="GeneID" id="880515"/>
<dbReference type="KEGG" id="pae:PA4210"/>
<dbReference type="PATRIC" id="fig|208964.12.peg.4411"/>
<dbReference type="PseudoCAP" id="PA4210"/>
<dbReference type="HOGENOM" id="CLU_141345_0_0_6"/>
<dbReference type="InParanoid" id="Q9HWH1"/>
<dbReference type="OrthoDB" id="8479735at2"/>
<dbReference type="PhylomeDB" id="Q9HWH1"/>
<dbReference type="BioCyc" id="PAER208964:G1FZ6-4283-MONOMER"/>
<dbReference type="UniPathway" id="UPA00099"/>
<dbReference type="PHI-base" id="PHI:9812"/>
<dbReference type="Proteomes" id="UP000002438">
    <property type="component" value="Chromosome"/>
</dbReference>
<dbReference type="GO" id="GO:0002047">
    <property type="term" value="P:phenazine biosynthetic process"/>
    <property type="evidence" value="ECO:0000314"/>
    <property type="project" value="PseudoCAP"/>
</dbReference>
<dbReference type="FunFam" id="3.10.450.50:FF:000014">
    <property type="entry name" value="Phenazine biosynthesis protein PhzB 2"/>
    <property type="match status" value="1"/>
</dbReference>
<dbReference type="Gene3D" id="3.10.450.50">
    <property type="match status" value="1"/>
</dbReference>
<dbReference type="InterPro" id="IPR032710">
    <property type="entry name" value="NTF2-like_dom_sf"/>
</dbReference>
<dbReference type="InterPro" id="IPR004964">
    <property type="entry name" value="PhzA_PhzB"/>
</dbReference>
<dbReference type="Pfam" id="PF03284">
    <property type="entry name" value="PHZA_PHZB"/>
    <property type="match status" value="1"/>
</dbReference>
<dbReference type="SUPFAM" id="SSF54427">
    <property type="entry name" value="NTF2-like"/>
    <property type="match status" value="1"/>
</dbReference>
<feature type="chain" id="PRO_0000287798" description="Phenazine biosynthesis protein PhzA1">
    <location>
        <begin position="1"/>
        <end position="162"/>
    </location>
</feature>
<feature type="sequence conflict" description="In Ref. 1; AAC64489." evidence="4" ref="1">
    <original>T</original>
    <variation>A</variation>
    <location>
        <position position="91"/>
    </location>
</feature>